<gene>
    <name evidence="1" type="primary">yqgF</name>
    <name type="ordered locus">Spro_4028</name>
</gene>
<proteinExistence type="inferred from homology"/>
<reference key="1">
    <citation type="submission" date="2007-09" db="EMBL/GenBank/DDBJ databases">
        <title>Complete sequence of chromosome of Serratia proteamaculans 568.</title>
        <authorList>
            <consortium name="US DOE Joint Genome Institute"/>
            <person name="Copeland A."/>
            <person name="Lucas S."/>
            <person name="Lapidus A."/>
            <person name="Barry K."/>
            <person name="Glavina del Rio T."/>
            <person name="Dalin E."/>
            <person name="Tice H."/>
            <person name="Pitluck S."/>
            <person name="Chain P."/>
            <person name="Malfatti S."/>
            <person name="Shin M."/>
            <person name="Vergez L."/>
            <person name="Schmutz J."/>
            <person name="Larimer F."/>
            <person name="Land M."/>
            <person name="Hauser L."/>
            <person name="Kyrpides N."/>
            <person name="Kim E."/>
            <person name="Taghavi S."/>
            <person name="Newman L."/>
            <person name="Vangronsveld J."/>
            <person name="van der Lelie D."/>
            <person name="Richardson P."/>
        </authorList>
    </citation>
    <scope>NUCLEOTIDE SEQUENCE [LARGE SCALE GENOMIC DNA]</scope>
    <source>
        <strain>568</strain>
    </source>
</reference>
<keyword id="KW-0963">Cytoplasm</keyword>
<keyword id="KW-0378">Hydrolase</keyword>
<keyword id="KW-0540">Nuclease</keyword>
<keyword id="KW-0690">Ribosome biogenesis</keyword>
<accession>A8GJ33</accession>
<comment type="function">
    <text evidence="1">Could be a nuclease involved in processing of the 5'-end of pre-16S rRNA.</text>
</comment>
<comment type="subcellular location">
    <subcellularLocation>
        <location evidence="1">Cytoplasm</location>
    </subcellularLocation>
</comment>
<comment type="similarity">
    <text evidence="1">Belongs to the YqgF nuclease family.</text>
</comment>
<dbReference type="EC" id="3.1.-.-" evidence="1"/>
<dbReference type="EMBL" id="CP000826">
    <property type="protein sequence ID" value="ABV43123.1"/>
    <property type="molecule type" value="Genomic_DNA"/>
</dbReference>
<dbReference type="SMR" id="A8GJ33"/>
<dbReference type="STRING" id="399741.Spro_4028"/>
<dbReference type="KEGG" id="spe:Spro_4028"/>
<dbReference type="eggNOG" id="COG0816">
    <property type="taxonomic scope" value="Bacteria"/>
</dbReference>
<dbReference type="HOGENOM" id="CLU_098240_3_0_6"/>
<dbReference type="OrthoDB" id="9796140at2"/>
<dbReference type="GO" id="GO:0005829">
    <property type="term" value="C:cytosol"/>
    <property type="evidence" value="ECO:0007669"/>
    <property type="project" value="TreeGrafter"/>
</dbReference>
<dbReference type="GO" id="GO:0004518">
    <property type="term" value="F:nuclease activity"/>
    <property type="evidence" value="ECO:0007669"/>
    <property type="project" value="UniProtKB-KW"/>
</dbReference>
<dbReference type="GO" id="GO:0000967">
    <property type="term" value="P:rRNA 5'-end processing"/>
    <property type="evidence" value="ECO:0007669"/>
    <property type="project" value="UniProtKB-UniRule"/>
</dbReference>
<dbReference type="CDD" id="cd16964">
    <property type="entry name" value="YqgF"/>
    <property type="match status" value="1"/>
</dbReference>
<dbReference type="FunFam" id="3.30.420.140:FF:000002">
    <property type="entry name" value="Putative pre-16S rRNA nuclease"/>
    <property type="match status" value="1"/>
</dbReference>
<dbReference type="Gene3D" id="3.30.420.140">
    <property type="entry name" value="YqgF/RNase H-like domain"/>
    <property type="match status" value="1"/>
</dbReference>
<dbReference type="HAMAP" id="MF_00651">
    <property type="entry name" value="Nuclease_YqgF"/>
    <property type="match status" value="1"/>
</dbReference>
<dbReference type="InterPro" id="IPR012337">
    <property type="entry name" value="RNaseH-like_sf"/>
</dbReference>
<dbReference type="InterPro" id="IPR005227">
    <property type="entry name" value="YqgF"/>
</dbReference>
<dbReference type="InterPro" id="IPR006641">
    <property type="entry name" value="YqgF/RNaseH-like_dom"/>
</dbReference>
<dbReference type="InterPro" id="IPR037027">
    <property type="entry name" value="YqgF/RNaseH-like_dom_sf"/>
</dbReference>
<dbReference type="NCBIfam" id="TIGR00250">
    <property type="entry name" value="RNAse_H_YqgF"/>
    <property type="match status" value="1"/>
</dbReference>
<dbReference type="PANTHER" id="PTHR33317">
    <property type="entry name" value="POLYNUCLEOTIDYL TRANSFERASE, RIBONUCLEASE H-LIKE SUPERFAMILY PROTEIN"/>
    <property type="match status" value="1"/>
</dbReference>
<dbReference type="PANTHER" id="PTHR33317:SF4">
    <property type="entry name" value="POLYNUCLEOTIDYL TRANSFERASE, RIBONUCLEASE H-LIKE SUPERFAMILY PROTEIN"/>
    <property type="match status" value="1"/>
</dbReference>
<dbReference type="Pfam" id="PF03652">
    <property type="entry name" value="RuvX"/>
    <property type="match status" value="1"/>
</dbReference>
<dbReference type="SMART" id="SM00732">
    <property type="entry name" value="YqgFc"/>
    <property type="match status" value="1"/>
</dbReference>
<dbReference type="SUPFAM" id="SSF53098">
    <property type="entry name" value="Ribonuclease H-like"/>
    <property type="match status" value="1"/>
</dbReference>
<protein>
    <recommendedName>
        <fullName evidence="1">Putative pre-16S rRNA nuclease</fullName>
        <ecNumber evidence="1">3.1.-.-</ecNumber>
    </recommendedName>
</protein>
<name>YQGF_SERP5</name>
<sequence>MTNRTIIAFDFGTKSIGAAIGQELTGSARALAAFKAQDGSPDWQKIEKLLKEWQPDLVVVGLPLNMDGTEQLVTEQARKFANRLHGRFGVQIALHDERLSTVEARANLFDRGGFRALDKGSVDSASAVVILESWFERQLG</sequence>
<organism>
    <name type="scientific">Serratia proteamaculans (strain 568)</name>
    <dbReference type="NCBI Taxonomy" id="399741"/>
    <lineage>
        <taxon>Bacteria</taxon>
        <taxon>Pseudomonadati</taxon>
        <taxon>Pseudomonadota</taxon>
        <taxon>Gammaproteobacteria</taxon>
        <taxon>Enterobacterales</taxon>
        <taxon>Yersiniaceae</taxon>
        <taxon>Serratia</taxon>
    </lineage>
</organism>
<feature type="chain" id="PRO_1000061565" description="Putative pre-16S rRNA nuclease">
    <location>
        <begin position="1"/>
        <end position="140"/>
    </location>
</feature>
<evidence type="ECO:0000255" key="1">
    <source>
        <dbReference type="HAMAP-Rule" id="MF_00651"/>
    </source>
</evidence>